<gene>
    <name evidence="1" type="primary">aspS</name>
    <name type="ordered locus">SERP1192</name>
</gene>
<accession>Q5HNS2</accession>
<feature type="chain" id="PRO_0000110948" description="Aspartate--tRNA ligase">
    <location>
        <begin position="1"/>
        <end position="588"/>
    </location>
</feature>
<feature type="region of interest" description="Aspartate" evidence="1">
    <location>
        <begin position="201"/>
        <end position="204"/>
    </location>
</feature>
<feature type="binding site" evidence="1">
    <location>
        <position position="177"/>
    </location>
    <ligand>
        <name>L-aspartate</name>
        <dbReference type="ChEBI" id="CHEBI:29991"/>
    </ligand>
</feature>
<feature type="binding site" evidence="1">
    <location>
        <begin position="223"/>
        <end position="225"/>
    </location>
    <ligand>
        <name>ATP</name>
        <dbReference type="ChEBI" id="CHEBI:30616"/>
    </ligand>
</feature>
<feature type="binding site" evidence="1">
    <location>
        <position position="223"/>
    </location>
    <ligand>
        <name>L-aspartate</name>
        <dbReference type="ChEBI" id="CHEBI:29991"/>
    </ligand>
</feature>
<feature type="binding site" evidence="1">
    <location>
        <position position="232"/>
    </location>
    <ligand>
        <name>ATP</name>
        <dbReference type="ChEBI" id="CHEBI:30616"/>
    </ligand>
</feature>
<feature type="binding site" evidence="1">
    <location>
        <position position="451"/>
    </location>
    <ligand>
        <name>L-aspartate</name>
        <dbReference type="ChEBI" id="CHEBI:29991"/>
    </ligand>
</feature>
<feature type="binding site" evidence="1">
    <location>
        <position position="485"/>
    </location>
    <ligand>
        <name>ATP</name>
        <dbReference type="ChEBI" id="CHEBI:30616"/>
    </ligand>
</feature>
<feature type="binding site" evidence="1">
    <location>
        <position position="492"/>
    </location>
    <ligand>
        <name>L-aspartate</name>
        <dbReference type="ChEBI" id="CHEBI:29991"/>
    </ligand>
</feature>
<feature type="binding site" evidence="1">
    <location>
        <begin position="537"/>
        <end position="540"/>
    </location>
    <ligand>
        <name>ATP</name>
        <dbReference type="ChEBI" id="CHEBI:30616"/>
    </ligand>
</feature>
<proteinExistence type="inferred from homology"/>
<keyword id="KW-0030">Aminoacyl-tRNA synthetase</keyword>
<keyword id="KW-0067">ATP-binding</keyword>
<keyword id="KW-0963">Cytoplasm</keyword>
<keyword id="KW-0436">Ligase</keyword>
<keyword id="KW-0547">Nucleotide-binding</keyword>
<keyword id="KW-0648">Protein biosynthesis</keyword>
<keyword id="KW-1185">Reference proteome</keyword>
<dbReference type="EC" id="6.1.1.12" evidence="1"/>
<dbReference type="EMBL" id="CP000029">
    <property type="protein sequence ID" value="AAW54571.1"/>
    <property type="molecule type" value="Genomic_DNA"/>
</dbReference>
<dbReference type="RefSeq" id="WP_001830852.1">
    <property type="nucleotide sequence ID" value="NC_002976.3"/>
</dbReference>
<dbReference type="SMR" id="Q5HNS2"/>
<dbReference type="STRING" id="176279.SERP1192"/>
<dbReference type="GeneID" id="50018572"/>
<dbReference type="KEGG" id="ser:SERP1192"/>
<dbReference type="eggNOG" id="COG0173">
    <property type="taxonomic scope" value="Bacteria"/>
</dbReference>
<dbReference type="HOGENOM" id="CLU_014330_3_2_9"/>
<dbReference type="Proteomes" id="UP000000531">
    <property type="component" value="Chromosome"/>
</dbReference>
<dbReference type="GO" id="GO:0005737">
    <property type="term" value="C:cytoplasm"/>
    <property type="evidence" value="ECO:0007669"/>
    <property type="project" value="UniProtKB-SubCell"/>
</dbReference>
<dbReference type="GO" id="GO:0004815">
    <property type="term" value="F:aspartate-tRNA ligase activity"/>
    <property type="evidence" value="ECO:0007669"/>
    <property type="project" value="UniProtKB-UniRule"/>
</dbReference>
<dbReference type="GO" id="GO:0005524">
    <property type="term" value="F:ATP binding"/>
    <property type="evidence" value="ECO:0007669"/>
    <property type="project" value="UniProtKB-UniRule"/>
</dbReference>
<dbReference type="GO" id="GO:0140096">
    <property type="term" value="F:catalytic activity, acting on a protein"/>
    <property type="evidence" value="ECO:0007669"/>
    <property type="project" value="UniProtKB-ARBA"/>
</dbReference>
<dbReference type="GO" id="GO:0003676">
    <property type="term" value="F:nucleic acid binding"/>
    <property type="evidence" value="ECO:0007669"/>
    <property type="project" value="InterPro"/>
</dbReference>
<dbReference type="GO" id="GO:0016740">
    <property type="term" value="F:transferase activity"/>
    <property type="evidence" value="ECO:0007669"/>
    <property type="project" value="UniProtKB-ARBA"/>
</dbReference>
<dbReference type="GO" id="GO:0006422">
    <property type="term" value="P:aspartyl-tRNA aminoacylation"/>
    <property type="evidence" value="ECO:0007669"/>
    <property type="project" value="UniProtKB-UniRule"/>
</dbReference>
<dbReference type="CDD" id="cd00777">
    <property type="entry name" value="AspRS_core"/>
    <property type="match status" value="1"/>
</dbReference>
<dbReference type="CDD" id="cd04317">
    <property type="entry name" value="EcAspRS_like_N"/>
    <property type="match status" value="1"/>
</dbReference>
<dbReference type="Gene3D" id="3.30.930.10">
    <property type="entry name" value="Bira Bifunctional Protein, Domain 2"/>
    <property type="match status" value="1"/>
</dbReference>
<dbReference type="Gene3D" id="3.30.1360.30">
    <property type="entry name" value="GAD-like domain"/>
    <property type="match status" value="1"/>
</dbReference>
<dbReference type="Gene3D" id="2.40.50.140">
    <property type="entry name" value="Nucleic acid-binding proteins"/>
    <property type="match status" value="1"/>
</dbReference>
<dbReference type="HAMAP" id="MF_00044">
    <property type="entry name" value="Asp_tRNA_synth_type1"/>
    <property type="match status" value="1"/>
</dbReference>
<dbReference type="InterPro" id="IPR004364">
    <property type="entry name" value="Aa-tRNA-synt_II"/>
</dbReference>
<dbReference type="InterPro" id="IPR006195">
    <property type="entry name" value="aa-tRNA-synth_II"/>
</dbReference>
<dbReference type="InterPro" id="IPR045864">
    <property type="entry name" value="aa-tRNA-synth_II/BPL/LPL"/>
</dbReference>
<dbReference type="InterPro" id="IPR004524">
    <property type="entry name" value="Asp-tRNA-ligase_1"/>
</dbReference>
<dbReference type="InterPro" id="IPR047089">
    <property type="entry name" value="Asp-tRNA-ligase_1_N"/>
</dbReference>
<dbReference type="InterPro" id="IPR002312">
    <property type="entry name" value="Asp/Asn-tRNA-synth_IIb"/>
</dbReference>
<dbReference type="InterPro" id="IPR047090">
    <property type="entry name" value="AspRS_core"/>
</dbReference>
<dbReference type="InterPro" id="IPR004115">
    <property type="entry name" value="GAD-like_sf"/>
</dbReference>
<dbReference type="InterPro" id="IPR029351">
    <property type="entry name" value="GAD_dom"/>
</dbReference>
<dbReference type="InterPro" id="IPR012340">
    <property type="entry name" value="NA-bd_OB-fold"/>
</dbReference>
<dbReference type="InterPro" id="IPR004365">
    <property type="entry name" value="NA-bd_OB_tRNA"/>
</dbReference>
<dbReference type="NCBIfam" id="TIGR00459">
    <property type="entry name" value="aspS_bact"/>
    <property type="match status" value="1"/>
</dbReference>
<dbReference type="NCBIfam" id="NF001750">
    <property type="entry name" value="PRK00476.1"/>
    <property type="match status" value="1"/>
</dbReference>
<dbReference type="PANTHER" id="PTHR22594:SF5">
    <property type="entry name" value="ASPARTATE--TRNA LIGASE, MITOCHONDRIAL"/>
    <property type="match status" value="1"/>
</dbReference>
<dbReference type="PANTHER" id="PTHR22594">
    <property type="entry name" value="ASPARTYL/LYSYL-TRNA SYNTHETASE"/>
    <property type="match status" value="1"/>
</dbReference>
<dbReference type="Pfam" id="PF02938">
    <property type="entry name" value="GAD"/>
    <property type="match status" value="1"/>
</dbReference>
<dbReference type="Pfam" id="PF00152">
    <property type="entry name" value="tRNA-synt_2"/>
    <property type="match status" value="1"/>
</dbReference>
<dbReference type="Pfam" id="PF01336">
    <property type="entry name" value="tRNA_anti-codon"/>
    <property type="match status" value="1"/>
</dbReference>
<dbReference type="PRINTS" id="PR01042">
    <property type="entry name" value="TRNASYNTHASP"/>
</dbReference>
<dbReference type="SUPFAM" id="SSF55681">
    <property type="entry name" value="Class II aaRS and biotin synthetases"/>
    <property type="match status" value="1"/>
</dbReference>
<dbReference type="SUPFAM" id="SSF55261">
    <property type="entry name" value="GAD domain-like"/>
    <property type="match status" value="1"/>
</dbReference>
<dbReference type="SUPFAM" id="SSF50249">
    <property type="entry name" value="Nucleic acid-binding proteins"/>
    <property type="match status" value="1"/>
</dbReference>
<dbReference type="PROSITE" id="PS50862">
    <property type="entry name" value="AA_TRNA_LIGASE_II"/>
    <property type="match status" value="1"/>
</dbReference>
<reference key="1">
    <citation type="journal article" date="2005" name="J. Bacteriol.">
        <title>Insights on evolution of virulence and resistance from the complete genome analysis of an early methicillin-resistant Staphylococcus aureus strain and a biofilm-producing methicillin-resistant Staphylococcus epidermidis strain.</title>
        <authorList>
            <person name="Gill S.R."/>
            <person name="Fouts D.E."/>
            <person name="Archer G.L."/>
            <person name="Mongodin E.F."/>
            <person name="DeBoy R.T."/>
            <person name="Ravel J."/>
            <person name="Paulsen I.T."/>
            <person name="Kolonay J.F."/>
            <person name="Brinkac L.M."/>
            <person name="Beanan M.J."/>
            <person name="Dodson R.J."/>
            <person name="Daugherty S.C."/>
            <person name="Madupu R."/>
            <person name="Angiuoli S.V."/>
            <person name="Durkin A.S."/>
            <person name="Haft D.H."/>
            <person name="Vamathevan J.J."/>
            <person name="Khouri H."/>
            <person name="Utterback T.R."/>
            <person name="Lee C."/>
            <person name="Dimitrov G."/>
            <person name="Jiang L."/>
            <person name="Qin H."/>
            <person name="Weidman J."/>
            <person name="Tran K."/>
            <person name="Kang K.H."/>
            <person name="Hance I.R."/>
            <person name="Nelson K.E."/>
            <person name="Fraser C.M."/>
        </authorList>
    </citation>
    <scope>NUCLEOTIDE SEQUENCE [LARGE SCALE GENOMIC DNA]</scope>
    <source>
        <strain>ATCC 35984 / DSM 28319 / BCRC 17069 / CCUG 31568 / BM 3577 / RP62A</strain>
    </source>
</reference>
<sequence length="588" mass="66883">MNKRTTYCGLVTEEFLNEKVTLKGWVHNRRDLGGLIFVDLRDREGIVQIVFNPDFSEEALQVAETVRSEYVVEVEGVVTKRDAETINPKIKTGQVEVQVSNIEIINKSETPPFSINEENVNVDENIRLKYRYLDLRRQELAQTFKMRHQTTRSIRQYLDNNGFFDIETPVLTKSTPEGARDYLVPSRVHEGEFYALPQSPQLFKQLLMISGFDKYYQIVKCFRDEDLRADRQPEFTQVDIEMSFVDQEDIIAMGEDMLRKVVKDVKGIDVSGPFPRMTYAEAMDRFGSDKPDTRFGMELINVSQLGKEMNFKVFKDTVDNNGEIKAIVAKDAANKYTRKDMDALTEFVNIYGAKGLAWVKVVDDGLSGPIARFFEDVNVETLKQLTEAKPGDLVMFVADKPNVVAQSLGALRIKLAKELGLIDESKLNFLWVTDWPLLEYDEDAKRYVAAHHPFTSPKREDIEKLDTEPENVQANAYDIVLNGYELGGGSIRIHDGELQQKMFEVLGFTNEQAQEQFGFLLDAFKYGAPPHGGIALGLDRLVMLLTNRTNLRDTIAFPKTASATCLLTDAPGEVSDKQLQELSLRIRH</sequence>
<protein>
    <recommendedName>
        <fullName evidence="1">Aspartate--tRNA ligase</fullName>
        <ecNumber evidence="1">6.1.1.12</ecNumber>
    </recommendedName>
    <alternativeName>
        <fullName evidence="1">Aspartyl-tRNA synthetase</fullName>
        <shortName evidence="1">AspRS</shortName>
    </alternativeName>
</protein>
<comment type="function">
    <text evidence="1">Catalyzes the attachment of L-aspartate to tRNA(Asp) in a two-step reaction: L-aspartate is first activated by ATP to form Asp-AMP and then transferred to the acceptor end of tRNA(Asp).</text>
</comment>
<comment type="catalytic activity">
    <reaction evidence="1">
        <text>tRNA(Asp) + L-aspartate + ATP = L-aspartyl-tRNA(Asp) + AMP + diphosphate</text>
        <dbReference type="Rhea" id="RHEA:19649"/>
        <dbReference type="Rhea" id="RHEA-COMP:9660"/>
        <dbReference type="Rhea" id="RHEA-COMP:9678"/>
        <dbReference type="ChEBI" id="CHEBI:29991"/>
        <dbReference type="ChEBI" id="CHEBI:30616"/>
        <dbReference type="ChEBI" id="CHEBI:33019"/>
        <dbReference type="ChEBI" id="CHEBI:78442"/>
        <dbReference type="ChEBI" id="CHEBI:78516"/>
        <dbReference type="ChEBI" id="CHEBI:456215"/>
        <dbReference type="EC" id="6.1.1.12"/>
    </reaction>
</comment>
<comment type="subunit">
    <text evidence="1">Homodimer.</text>
</comment>
<comment type="subcellular location">
    <subcellularLocation>
        <location evidence="1">Cytoplasm</location>
    </subcellularLocation>
</comment>
<comment type="similarity">
    <text evidence="1">Belongs to the class-II aminoacyl-tRNA synthetase family. Type 1 subfamily.</text>
</comment>
<name>SYD_STAEQ</name>
<evidence type="ECO:0000255" key="1">
    <source>
        <dbReference type="HAMAP-Rule" id="MF_00044"/>
    </source>
</evidence>
<organism>
    <name type="scientific">Staphylococcus epidermidis (strain ATCC 35984 / DSM 28319 / BCRC 17069 / CCUG 31568 / BM 3577 / RP62A)</name>
    <dbReference type="NCBI Taxonomy" id="176279"/>
    <lineage>
        <taxon>Bacteria</taxon>
        <taxon>Bacillati</taxon>
        <taxon>Bacillota</taxon>
        <taxon>Bacilli</taxon>
        <taxon>Bacillales</taxon>
        <taxon>Staphylococcaceae</taxon>
        <taxon>Staphylococcus</taxon>
    </lineage>
</organism>